<dbReference type="EC" id="1.14.-.-" evidence="1"/>
<dbReference type="EMBL" id="CP001120">
    <property type="protein sequence ID" value="ACF65838.1"/>
    <property type="molecule type" value="Genomic_DNA"/>
</dbReference>
<dbReference type="RefSeq" id="WP_001144641.1">
    <property type="nucleotide sequence ID" value="NC_011083.1"/>
</dbReference>
<dbReference type="SMR" id="B4TES7"/>
<dbReference type="KEGG" id="seh:SeHA_C1267"/>
<dbReference type="HOGENOM" id="CLU_038878_1_1_6"/>
<dbReference type="Proteomes" id="UP000001866">
    <property type="component" value="Chromosome"/>
</dbReference>
<dbReference type="GO" id="GO:0016705">
    <property type="term" value="F:oxidoreductase activity, acting on paired donors, with incorporation or reduction of molecular oxygen"/>
    <property type="evidence" value="ECO:0007669"/>
    <property type="project" value="UniProtKB-UniRule"/>
</dbReference>
<dbReference type="GO" id="GO:0006400">
    <property type="term" value="P:tRNA modification"/>
    <property type="evidence" value="ECO:0007669"/>
    <property type="project" value="UniProtKB-UniRule"/>
</dbReference>
<dbReference type="CDD" id="cd01518">
    <property type="entry name" value="RHOD_YceA"/>
    <property type="match status" value="1"/>
</dbReference>
<dbReference type="Gene3D" id="3.30.70.100">
    <property type="match status" value="1"/>
</dbReference>
<dbReference type="Gene3D" id="3.40.250.10">
    <property type="entry name" value="Rhodanese-like domain"/>
    <property type="match status" value="1"/>
</dbReference>
<dbReference type="HAMAP" id="MF_00469">
    <property type="entry name" value="TrhO"/>
    <property type="match status" value="1"/>
</dbReference>
<dbReference type="InterPro" id="IPR001763">
    <property type="entry name" value="Rhodanese-like_dom"/>
</dbReference>
<dbReference type="InterPro" id="IPR036873">
    <property type="entry name" value="Rhodanese-like_dom_sf"/>
</dbReference>
<dbReference type="InterPro" id="IPR022111">
    <property type="entry name" value="Rhodanese_C"/>
</dbReference>
<dbReference type="InterPro" id="IPR020936">
    <property type="entry name" value="TrhO"/>
</dbReference>
<dbReference type="InterPro" id="IPR040503">
    <property type="entry name" value="TRHO_N"/>
</dbReference>
<dbReference type="NCBIfam" id="NF001133">
    <property type="entry name" value="PRK00142.1-1"/>
    <property type="match status" value="1"/>
</dbReference>
<dbReference type="PANTHER" id="PTHR43846:SF1">
    <property type="entry name" value="TRNA URIDINE(34) HYDROXYLASE"/>
    <property type="match status" value="1"/>
</dbReference>
<dbReference type="PANTHER" id="PTHR43846">
    <property type="entry name" value="UPF0176 PROTEIN YCEA"/>
    <property type="match status" value="1"/>
</dbReference>
<dbReference type="Pfam" id="PF00581">
    <property type="entry name" value="Rhodanese"/>
    <property type="match status" value="1"/>
</dbReference>
<dbReference type="Pfam" id="PF12368">
    <property type="entry name" value="Rhodanese_C"/>
    <property type="match status" value="1"/>
</dbReference>
<dbReference type="Pfam" id="PF17773">
    <property type="entry name" value="UPF0176_N"/>
    <property type="match status" value="1"/>
</dbReference>
<dbReference type="SMART" id="SM00450">
    <property type="entry name" value="RHOD"/>
    <property type="match status" value="1"/>
</dbReference>
<dbReference type="SUPFAM" id="SSF52821">
    <property type="entry name" value="Rhodanese/Cell cycle control phosphatase"/>
    <property type="match status" value="1"/>
</dbReference>
<dbReference type="PROSITE" id="PS50206">
    <property type="entry name" value="RHODANESE_3"/>
    <property type="match status" value="1"/>
</dbReference>
<name>TRHO_SALHS</name>
<evidence type="ECO:0000255" key="1">
    <source>
        <dbReference type="HAMAP-Rule" id="MF_00469"/>
    </source>
</evidence>
<evidence type="ECO:0000256" key="2">
    <source>
        <dbReference type="SAM" id="MobiDB-lite"/>
    </source>
</evidence>
<proteinExistence type="inferred from homology"/>
<sequence>MPVLHNRISNDELKAKMLAESEPRTTISFYKYFTIASPQQTRDALYQVFTALDVFGRVYLAHEGINAQISVPQSKVETFRQQLYTFDPALDGVRLNIALEDDGKSFWVLRMKVRDRIVADGIDDPTFDASNVGDYLKAADVNAMLDDPDAVFIDMRNHYEYEVGHFENALEIPADTFREQLPKAVEMLREHADKKIVMYCTGGIRCEKASAWMKHNGFNKVWHIEGGIIEYARRAREQGLPVRFIGKNFVFDERMGERISDEVIAHCHQCGAPCDSHTNCKNDGCHLLFIQCPQCASKFNGCCSEQCCEELALPEEEQRRRRAGRENGNKIFNKSRGRLNSKLSIPDPAE</sequence>
<comment type="function">
    <text evidence="1">Catalyzes oxygen-dependent 5-hydroxyuridine (ho5U) modification at position 34 in tRNAs.</text>
</comment>
<comment type="catalytic activity">
    <reaction evidence="1">
        <text>uridine(34) in tRNA + AH2 + O2 = 5-hydroxyuridine(34) in tRNA + A + H2O</text>
        <dbReference type="Rhea" id="RHEA:64224"/>
        <dbReference type="Rhea" id="RHEA-COMP:11727"/>
        <dbReference type="Rhea" id="RHEA-COMP:13381"/>
        <dbReference type="ChEBI" id="CHEBI:13193"/>
        <dbReference type="ChEBI" id="CHEBI:15377"/>
        <dbReference type="ChEBI" id="CHEBI:15379"/>
        <dbReference type="ChEBI" id="CHEBI:17499"/>
        <dbReference type="ChEBI" id="CHEBI:65315"/>
        <dbReference type="ChEBI" id="CHEBI:136877"/>
    </reaction>
</comment>
<comment type="similarity">
    <text evidence="1">Belongs to the TrhO family.</text>
</comment>
<feature type="chain" id="PRO_1000200375" description="tRNA uridine(34) hydroxylase">
    <location>
        <begin position="1"/>
        <end position="350"/>
    </location>
</feature>
<feature type="domain" description="Rhodanese" evidence="1">
    <location>
        <begin position="146"/>
        <end position="240"/>
    </location>
</feature>
<feature type="region of interest" description="Disordered" evidence="2">
    <location>
        <begin position="319"/>
        <end position="350"/>
    </location>
</feature>
<feature type="compositionally biased region" description="Basic and acidic residues" evidence="2">
    <location>
        <begin position="319"/>
        <end position="328"/>
    </location>
</feature>
<feature type="active site" description="Cysteine persulfide intermediate" evidence="1">
    <location>
        <position position="200"/>
    </location>
</feature>
<reference key="1">
    <citation type="journal article" date="2011" name="J. Bacteriol.">
        <title>Comparative genomics of 28 Salmonella enterica isolates: evidence for CRISPR-mediated adaptive sublineage evolution.</title>
        <authorList>
            <person name="Fricke W.F."/>
            <person name="Mammel M.K."/>
            <person name="McDermott P.F."/>
            <person name="Tartera C."/>
            <person name="White D.G."/>
            <person name="Leclerc J.E."/>
            <person name="Ravel J."/>
            <person name="Cebula T.A."/>
        </authorList>
    </citation>
    <scope>NUCLEOTIDE SEQUENCE [LARGE SCALE GENOMIC DNA]</scope>
    <source>
        <strain>SL476</strain>
    </source>
</reference>
<organism>
    <name type="scientific">Salmonella heidelberg (strain SL476)</name>
    <dbReference type="NCBI Taxonomy" id="454169"/>
    <lineage>
        <taxon>Bacteria</taxon>
        <taxon>Pseudomonadati</taxon>
        <taxon>Pseudomonadota</taxon>
        <taxon>Gammaproteobacteria</taxon>
        <taxon>Enterobacterales</taxon>
        <taxon>Enterobacteriaceae</taxon>
        <taxon>Salmonella</taxon>
    </lineage>
</organism>
<protein>
    <recommendedName>
        <fullName evidence="1">tRNA uridine(34) hydroxylase</fullName>
        <ecNumber evidence="1">1.14.-.-</ecNumber>
    </recommendedName>
    <alternativeName>
        <fullName evidence="1">tRNA hydroxylation protein O</fullName>
    </alternativeName>
</protein>
<gene>
    <name evidence="1" type="primary">trhO</name>
    <name type="synonym">yceA</name>
    <name type="ordered locus">SeHA_C1267</name>
</gene>
<accession>B4TES7</accession>
<keyword id="KW-0560">Oxidoreductase</keyword>
<keyword id="KW-0819">tRNA processing</keyword>